<protein>
    <recommendedName>
        <fullName evidence="1">RPA-related protein RADX</fullName>
    </recommendedName>
</protein>
<name>RADX_RAT</name>
<sequence length="844" mass="96287">MSGESDQPQPGPSHAGLYLEHRERDQAGVPGGVIRRAGSQRHRSWIQTVIEQITGSPRQCVTLSEVVPVSVLAVQRYLLEDEPRDTVPKPPLYCYDVTISDGVYQEKCYLDPSLNFLVYQNILKVGIEMRISRVSCLYNEKRLGQGILCIDKVHCGEPLDVISVETPFRNRAHEEKPERPLRGSKSHYLALWNNEDPYGDIWKTNKQPEEFNFNNTKIISLSHLEMTWHNRKNFPALLVRILHKSKLRYYGKPNKKMIEPYQTYLEVADSSGMVSVIMWNALCPEWYKSLRVGLILLLQDYSVKKSYPLRIQPDPVDPQMKLISTMEICLNLRDPPTNIVIIPEKQLKSEWKLPKLINRFITRSELDDMPENSICDVIGMLSFVGRVQRSKKKENSEDFWSYRWIHITDGTSEQPFIVQLFSTSQPEVFENIYPMTYFVCTQLKVVRNNSQVPKLLYLTTTNESRVLITGHRGQPYTYDTKAKKIIQWIKTKTNLEAKNTVIGGYYPYPPVPETFSKYSRFIKAESLLTTISEVRKVIEDLQYREQKRIAIQGIITAIKYIPYNHSAKSAPASETLQNASPPSTSQAAAKEGHYHERGSKRSQDDRPMDSLPMVLSLCAKRKILQGPTANPVPVPQPHSSAQMKGNKPNIPSRENSTANATGKSKRIINDRWESQLWRDKKFSLRDHLHYGHVDPESIPRKFILGHEKFLTQQFNSQPAKYVPPEGKPPKLDEFQSARSLGHFEVTILGLNHEIAIDVAFLPMYSPEDVETSQIDTFLTCMNYSCVYPPAAPVSGRVPDPKAVAGDIVKAAADLDRVHIIGILDICNLGNNKVEVCLQKIYTPE</sequence>
<reference key="1">
    <citation type="submission" date="2005-07" db="EMBL/GenBank/DDBJ databases">
        <authorList>
            <person name="Mural R.J."/>
            <person name="Adams M.D."/>
            <person name="Myers E.W."/>
            <person name="Smith H.O."/>
            <person name="Venter J.C."/>
        </authorList>
    </citation>
    <scope>NUCLEOTIDE SEQUENCE [LARGE SCALE GENOMIC DNA]</scope>
    <source>
        <strain>Brown Norway</strain>
    </source>
</reference>
<reference key="2">
    <citation type="journal article" date="2004" name="Genome Res.">
        <title>The status, quality, and expansion of the NIH full-length cDNA project: the Mammalian Gene Collection (MGC).</title>
        <authorList>
            <consortium name="The MGC Project Team"/>
        </authorList>
    </citation>
    <scope>NUCLEOTIDE SEQUENCE [LARGE SCALE MRNA]</scope>
    <source>
        <tissue>Testis</tissue>
    </source>
</reference>
<comment type="function">
    <text evidence="1">Single-stranded DNA-binding protein recruited to replication forks to maintain genome stability. Prevents fork collapse by antagonizing the accumulation of RAD51 at forks to ensure the proper balance of fork remodeling and protection without interfering with the capacity of cells to complete homologous recombination of double-strand breaks.</text>
</comment>
<comment type="subcellular location">
    <subcellularLocation>
        <location evidence="1">Chromosome</location>
    </subcellularLocation>
    <text evidence="1">Recruited to replication forks.</text>
</comment>
<gene>
    <name evidence="1" type="primary">Radx</name>
</gene>
<keyword id="KW-0158">Chromosome</keyword>
<keyword id="KW-0238">DNA-binding</keyword>
<keyword id="KW-1185">Reference proteome</keyword>
<proteinExistence type="evidence at transcript level"/>
<feature type="chain" id="PRO_0000373802" description="RPA-related protein RADX">
    <location>
        <begin position="1"/>
        <end position="844"/>
    </location>
</feature>
<feature type="DNA-binding region" description="OB" evidence="1">
    <location>
        <begin position="228"/>
        <end position="331"/>
    </location>
</feature>
<feature type="region of interest" description="Disordered" evidence="2">
    <location>
        <begin position="571"/>
        <end position="609"/>
    </location>
</feature>
<feature type="region of interest" description="Disordered" evidence="2">
    <location>
        <begin position="626"/>
        <end position="664"/>
    </location>
</feature>
<feature type="compositionally biased region" description="Polar residues" evidence="2">
    <location>
        <begin position="572"/>
        <end position="587"/>
    </location>
</feature>
<feature type="compositionally biased region" description="Basic and acidic residues" evidence="2">
    <location>
        <begin position="590"/>
        <end position="608"/>
    </location>
</feature>
<feature type="compositionally biased region" description="Polar residues" evidence="2">
    <location>
        <begin position="652"/>
        <end position="662"/>
    </location>
</feature>
<accession>B2GV47</accession>
<evidence type="ECO:0000250" key="1">
    <source>
        <dbReference type="UniProtKB" id="Q6NSI4"/>
    </source>
</evidence>
<evidence type="ECO:0000256" key="2">
    <source>
        <dbReference type="SAM" id="MobiDB-lite"/>
    </source>
</evidence>
<organism>
    <name type="scientific">Rattus norvegicus</name>
    <name type="common">Rat</name>
    <dbReference type="NCBI Taxonomy" id="10116"/>
    <lineage>
        <taxon>Eukaryota</taxon>
        <taxon>Metazoa</taxon>
        <taxon>Chordata</taxon>
        <taxon>Craniata</taxon>
        <taxon>Vertebrata</taxon>
        <taxon>Euteleostomi</taxon>
        <taxon>Mammalia</taxon>
        <taxon>Eutheria</taxon>
        <taxon>Euarchontoglires</taxon>
        <taxon>Glires</taxon>
        <taxon>Rodentia</taxon>
        <taxon>Myomorpha</taxon>
        <taxon>Muroidea</taxon>
        <taxon>Muridae</taxon>
        <taxon>Murinae</taxon>
        <taxon>Rattus</taxon>
    </lineage>
</organism>
<dbReference type="EMBL" id="CH474076">
    <property type="protein sequence ID" value="EDL88019.1"/>
    <property type="molecule type" value="Genomic_DNA"/>
</dbReference>
<dbReference type="EMBL" id="BC166523">
    <property type="protein sequence ID" value="AAI66523.1"/>
    <property type="molecule type" value="mRNA"/>
</dbReference>
<dbReference type="RefSeq" id="NP_001120849.1">
    <property type="nucleotide sequence ID" value="NM_001127377.3"/>
</dbReference>
<dbReference type="SMR" id="B2GV47"/>
<dbReference type="FunCoup" id="B2GV47">
    <property type="interactions" value="186"/>
</dbReference>
<dbReference type="STRING" id="10116.ENSRNOP00000014811"/>
<dbReference type="iPTMnet" id="B2GV47"/>
<dbReference type="PhosphoSitePlus" id="B2GV47"/>
<dbReference type="PaxDb" id="10116-ENSRNOP00000014811"/>
<dbReference type="GeneID" id="680663"/>
<dbReference type="KEGG" id="rno:680663"/>
<dbReference type="UCSC" id="RGD:1589413">
    <property type="organism name" value="rat"/>
</dbReference>
<dbReference type="AGR" id="RGD:1589413"/>
<dbReference type="CTD" id="55086"/>
<dbReference type="RGD" id="1589413">
    <property type="gene designation" value="Radx"/>
</dbReference>
<dbReference type="VEuPathDB" id="HostDB:ENSRNOG00000011120"/>
<dbReference type="eggNOG" id="ENOG502QSE7">
    <property type="taxonomic scope" value="Eukaryota"/>
</dbReference>
<dbReference type="HOGENOM" id="CLU_016770_0_0_1"/>
<dbReference type="InParanoid" id="B2GV47"/>
<dbReference type="OrthoDB" id="53929at9989"/>
<dbReference type="PhylomeDB" id="B2GV47"/>
<dbReference type="PRO" id="PR:B2GV47"/>
<dbReference type="Proteomes" id="UP000002494">
    <property type="component" value="Chromosome X"/>
</dbReference>
<dbReference type="Proteomes" id="UP000234681">
    <property type="component" value="Chromosome x"/>
</dbReference>
<dbReference type="Bgee" id="ENSRNOG00000011120">
    <property type="expression patterns" value="Expressed in duodenum and 4 other cell types or tissues"/>
</dbReference>
<dbReference type="GO" id="GO:0005657">
    <property type="term" value="C:replication fork"/>
    <property type="evidence" value="ECO:0000250"/>
    <property type="project" value="UniProtKB"/>
</dbReference>
<dbReference type="GO" id="GO:0003697">
    <property type="term" value="F:single-stranded DNA binding"/>
    <property type="evidence" value="ECO:0000250"/>
    <property type="project" value="UniProtKB"/>
</dbReference>
<dbReference type="GO" id="GO:2000042">
    <property type="term" value="P:negative regulation of double-strand break repair via homologous recombination"/>
    <property type="evidence" value="ECO:0000250"/>
    <property type="project" value="UniProtKB"/>
</dbReference>
<dbReference type="GO" id="GO:0006282">
    <property type="term" value="P:regulation of DNA repair"/>
    <property type="evidence" value="ECO:0000318"/>
    <property type="project" value="GO_Central"/>
</dbReference>
<dbReference type="Gene3D" id="2.40.50.140">
    <property type="entry name" value="Nucleic acid-binding proteins"/>
    <property type="match status" value="1"/>
</dbReference>
<dbReference type="InterPro" id="IPR012340">
    <property type="entry name" value="NA-bd_OB-fold"/>
</dbReference>
<dbReference type="InterPro" id="IPR040893">
    <property type="entry name" value="RADX"/>
</dbReference>
<dbReference type="PANTHER" id="PTHR14944">
    <property type="entry name" value="RPA-RELATED PROTEIN RADX"/>
    <property type="match status" value="1"/>
</dbReference>
<dbReference type="PANTHER" id="PTHR14944:SF2">
    <property type="entry name" value="RPA-RELATED PROTEIN RADX"/>
    <property type="match status" value="1"/>
</dbReference>
<dbReference type="Pfam" id="PF17659">
    <property type="entry name" value="RADX"/>
    <property type="match status" value="1"/>
</dbReference>
<dbReference type="SUPFAM" id="SSF50249">
    <property type="entry name" value="Nucleic acid-binding proteins"/>
    <property type="match status" value="2"/>
</dbReference>